<dbReference type="EMBL" id="CU468135">
    <property type="protein sequence ID" value="CAO95792.1"/>
    <property type="molecule type" value="Genomic_DNA"/>
</dbReference>
<dbReference type="RefSeq" id="WP_012440494.1">
    <property type="nucleotide sequence ID" value="NC_010694.1"/>
</dbReference>
<dbReference type="SMR" id="B2VDB1"/>
<dbReference type="STRING" id="465817.ETA_07460"/>
<dbReference type="KEGG" id="eta:ETA_07460"/>
<dbReference type="eggNOG" id="COG2001">
    <property type="taxonomic scope" value="Bacteria"/>
</dbReference>
<dbReference type="HOGENOM" id="CLU_107907_2_0_6"/>
<dbReference type="OrthoDB" id="9807753at2"/>
<dbReference type="Proteomes" id="UP000001726">
    <property type="component" value="Chromosome"/>
</dbReference>
<dbReference type="GO" id="GO:0005737">
    <property type="term" value="C:cytoplasm"/>
    <property type="evidence" value="ECO:0007669"/>
    <property type="project" value="UniProtKB-UniRule"/>
</dbReference>
<dbReference type="GO" id="GO:0009295">
    <property type="term" value="C:nucleoid"/>
    <property type="evidence" value="ECO:0007669"/>
    <property type="project" value="UniProtKB-SubCell"/>
</dbReference>
<dbReference type="GO" id="GO:0003700">
    <property type="term" value="F:DNA-binding transcription factor activity"/>
    <property type="evidence" value="ECO:0007669"/>
    <property type="project" value="UniProtKB-UniRule"/>
</dbReference>
<dbReference type="GO" id="GO:0000976">
    <property type="term" value="F:transcription cis-regulatory region binding"/>
    <property type="evidence" value="ECO:0007669"/>
    <property type="project" value="TreeGrafter"/>
</dbReference>
<dbReference type="GO" id="GO:2000143">
    <property type="term" value="P:negative regulation of DNA-templated transcription initiation"/>
    <property type="evidence" value="ECO:0007669"/>
    <property type="project" value="TreeGrafter"/>
</dbReference>
<dbReference type="CDD" id="cd16321">
    <property type="entry name" value="MraZ_C"/>
    <property type="match status" value="1"/>
</dbReference>
<dbReference type="CDD" id="cd16320">
    <property type="entry name" value="MraZ_N"/>
    <property type="match status" value="1"/>
</dbReference>
<dbReference type="FunFam" id="3.40.1550.20:FF:000001">
    <property type="entry name" value="Transcriptional regulator MraZ"/>
    <property type="match status" value="1"/>
</dbReference>
<dbReference type="Gene3D" id="3.40.1550.20">
    <property type="entry name" value="Transcriptional regulator MraZ domain"/>
    <property type="match status" value="1"/>
</dbReference>
<dbReference type="HAMAP" id="MF_01008">
    <property type="entry name" value="MraZ"/>
    <property type="match status" value="1"/>
</dbReference>
<dbReference type="InterPro" id="IPR003444">
    <property type="entry name" value="MraZ"/>
</dbReference>
<dbReference type="InterPro" id="IPR035644">
    <property type="entry name" value="MraZ_C"/>
</dbReference>
<dbReference type="InterPro" id="IPR020603">
    <property type="entry name" value="MraZ_dom"/>
</dbReference>
<dbReference type="InterPro" id="IPR035642">
    <property type="entry name" value="MraZ_N"/>
</dbReference>
<dbReference type="InterPro" id="IPR038619">
    <property type="entry name" value="MraZ_sf"/>
</dbReference>
<dbReference type="InterPro" id="IPR007159">
    <property type="entry name" value="SpoVT-AbrB_dom"/>
</dbReference>
<dbReference type="InterPro" id="IPR037914">
    <property type="entry name" value="SpoVT-AbrB_sf"/>
</dbReference>
<dbReference type="NCBIfam" id="TIGR00242">
    <property type="entry name" value="division/cell wall cluster transcriptional repressor MraZ"/>
    <property type="match status" value="1"/>
</dbReference>
<dbReference type="PANTHER" id="PTHR34701">
    <property type="entry name" value="TRANSCRIPTIONAL REGULATOR MRAZ"/>
    <property type="match status" value="1"/>
</dbReference>
<dbReference type="PANTHER" id="PTHR34701:SF1">
    <property type="entry name" value="TRANSCRIPTIONAL REGULATOR MRAZ"/>
    <property type="match status" value="1"/>
</dbReference>
<dbReference type="Pfam" id="PF02381">
    <property type="entry name" value="MraZ"/>
    <property type="match status" value="2"/>
</dbReference>
<dbReference type="SUPFAM" id="SSF89447">
    <property type="entry name" value="AbrB/MazE/MraZ-like"/>
    <property type="match status" value="1"/>
</dbReference>
<dbReference type="PROSITE" id="PS51740">
    <property type="entry name" value="SPOVT_ABRB"/>
    <property type="match status" value="2"/>
</dbReference>
<organism>
    <name type="scientific">Erwinia tasmaniensis (strain DSM 17950 / CFBP 7177 / CIP 109463 / NCPPB 4357 / Et1/99)</name>
    <dbReference type="NCBI Taxonomy" id="465817"/>
    <lineage>
        <taxon>Bacteria</taxon>
        <taxon>Pseudomonadati</taxon>
        <taxon>Pseudomonadota</taxon>
        <taxon>Gammaproteobacteria</taxon>
        <taxon>Enterobacterales</taxon>
        <taxon>Erwiniaceae</taxon>
        <taxon>Erwinia</taxon>
    </lineage>
</organism>
<comment type="function">
    <text evidence="1">Negatively regulates its own expression and that of the subsequent genes in the proximal part of the division and cell wall (dcw) gene cluster. Acts by binding directly to DNA. May also regulate the expression of genes outside the dcw cluster.</text>
</comment>
<comment type="subunit">
    <text evidence="1">Forms oligomers.</text>
</comment>
<comment type="subcellular location">
    <subcellularLocation>
        <location evidence="1">Cytoplasm</location>
        <location evidence="1">Nucleoid</location>
    </subcellularLocation>
</comment>
<comment type="similarity">
    <text evidence="1">Belongs to the MraZ family.</text>
</comment>
<name>MRAZ_ERWT9</name>
<keyword id="KW-0963">Cytoplasm</keyword>
<keyword id="KW-0238">DNA-binding</keyword>
<keyword id="KW-1185">Reference proteome</keyword>
<keyword id="KW-0677">Repeat</keyword>
<keyword id="KW-0678">Repressor</keyword>
<keyword id="KW-0804">Transcription</keyword>
<keyword id="KW-0805">Transcription regulation</keyword>
<sequence>MFRGATLVNLDSKGRLAVPTRYREMLNEGSQGQMVCTIDLHQPCLLLYPLPEWEIIEQKLSRLSSMNPAERRVQRLLLGHASECQMDNAGRILLANTLRQQASLSKQVMLVGQFNKFELWDEQTWYQQVREDIDEERSSKQPLSERLQDLSL</sequence>
<feature type="chain" id="PRO_1000134797" description="Transcriptional regulator MraZ">
    <location>
        <begin position="1"/>
        <end position="152"/>
    </location>
</feature>
<feature type="domain" description="SpoVT-AbrB 1" evidence="2">
    <location>
        <begin position="5"/>
        <end position="52"/>
    </location>
</feature>
<feature type="domain" description="SpoVT-AbrB 2" evidence="2">
    <location>
        <begin position="81"/>
        <end position="124"/>
    </location>
</feature>
<protein>
    <recommendedName>
        <fullName>Transcriptional regulator MraZ</fullName>
    </recommendedName>
</protein>
<evidence type="ECO:0000255" key="1">
    <source>
        <dbReference type="HAMAP-Rule" id="MF_01008"/>
    </source>
</evidence>
<evidence type="ECO:0000255" key="2">
    <source>
        <dbReference type="PROSITE-ProRule" id="PRU01076"/>
    </source>
</evidence>
<proteinExistence type="inferred from homology"/>
<reference key="1">
    <citation type="journal article" date="2008" name="Environ. Microbiol.">
        <title>The genome of Erwinia tasmaniensis strain Et1/99, a non-pathogenic bacterium in the genus Erwinia.</title>
        <authorList>
            <person name="Kube M."/>
            <person name="Migdoll A.M."/>
            <person name="Mueller I."/>
            <person name="Kuhl H."/>
            <person name="Beck A."/>
            <person name="Reinhardt R."/>
            <person name="Geider K."/>
        </authorList>
    </citation>
    <scope>NUCLEOTIDE SEQUENCE [LARGE SCALE GENOMIC DNA]</scope>
    <source>
        <strain>DSM 17950 / CFBP 7177 / CIP 109463 / NCPPB 4357 / Et1/99</strain>
    </source>
</reference>
<accession>B2VDB1</accession>
<gene>
    <name evidence="1" type="primary">mraZ</name>
    <name type="ordered locus">ETA_07460</name>
</gene>